<feature type="chain" id="PRO_0000085847" description="Serine/threonine-protein kinase cek1">
    <location>
        <begin position="1"/>
        <end position="1338"/>
    </location>
</feature>
<feature type="domain" description="PAS" evidence="1">
    <location>
        <begin position="28"/>
        <end position="98"/>
    </location>
</feature>
<feature type="domain" description="Protein kinase" evidence="2">
    <location>
        <begin position="589"/>
        <end position="958"/>
    </location>
</feature>
<feature type="domain" description="AGC-kinase C-terminal" evidence="3">
    <location>
        <begin position="959"/>
        <end position="1057"/>
    </location>
</feature>
<feature type="region of interest" description="Disordered" evidence="5">
    <location>
        <begin position="484"/>
        <end position="554"/>
    </location>
</feature>
<feature type="region of interest" description="Disordered" evidence="5">
    <location>
        <begin position="813"/>
        <end position="844"/>
    </location>
</feature>
<feature type="region of interest" description="Disordered" evidence="5">
    <location>
        <begin position="1010"/>
        <end position="1035"/>
    </location>
</feature>
<feature type="region of interest" description="Disordered" evidence="5">
    <location>
        <begin position="1159"/>
        <end position="1185"/>
    </location>
</feature>
<feature type="compositionally biased region" description="Polar residues" evidence="5">
    <location>
        <begin position="491"/>
        <end position="501"/>
    </location>
</feature>
<feature type="compositionally biased region" description="Polar residues" evidence="5">
    <location>
        <begin position="541"/>
        <end position="550"/>
    </location>
</feature>
<feature type="compositionally biased region" description="Polar residues" evidence="5">
    <location>
        <begin position="813"/>
        <end position="842"/>
    </location>
</feature>
<feature type="compositionally biased region" description="Low complexity" evidence="5">
    <location>
        <begin position="1159"/>
        <end position="1174"/>
    </location>
</feature>
<feature type="active site" description="Proton acceptor" evidence="2 4">
    <location>
        <position position="713"/>
    </location>
</feature>
<feature type="binding site" evidence="2">
    <location>
        <begin position="595"/>
        <end position="603"/>
    </location>
    <ligand>
        <name>ATP</name>
        <dbReference type="ChEBI" id="CHEBI:30616"/>
    </ligand>
</feature>
<feature type="binding site" evidence="2">
    <location>
        <position position="618"/>
    </location>
    <ligand>
        <name>ATP</name>
        <dbReference type="ChEBI" id="CHEBI:30616"/>
    </ligand>
</feature>
<feature type="modified residue" description="Phosphoserine" evidence="6">
    <location>
        <position position="525"/>
    </location>
</feature>
<feature type="modified residue" description="Phosphoserine" evidence="6">
    <location>
        <position position="748"/>
    </location>
</feature>
<feature type="modified residue" description="Phosphoserine" evidence="6">
    <location>
        <position position="1211"/>
    </location>
</feature>
<feature type="sequence conflict" description="In Ref. 1; BAA06551." evidence="7" ref="1">
    <original>FVYICEDETCIPTDLQSDGVLLKPITCENIESCLRKLDVWHS</original>
    <variation>VCIHLRGRDLHSD</variation>
    <location>
        <begin position="1297"/>
        <end position="1338"/>
    </location>
</feature>
<name>CEK1_SCHPO</name>
<proteinExistence type="evidence at protein level"/>
<comment type="function">
    <text>May facilitate the progression of anaphase through direct or indirect interaction with the cut8 protein.</text>
</comment>
<comment type="catalytic activity">
    <reaction>
        <text>L-seryl-[protein] + ATP = O-phospho-L-seryl-[protein] + ADP + H(+)</text>
        <dbReference type="Rhea" id="RHEA:17989"/>
        <dbReference type="Rhea" id="RHEA-COMP:9863"/>
        <dbReference type="Rhea" id="RHEA-COMP:11604"/>
        <dbReference type="ChEBI" id="CHEBI:15378"/>
        <dbReference type="ChEBI" id="CHEBI:29999"/>
        <dbReference type="ChEBI" id="CHEBI:30616"/>
        <dbReference type="ChEBI" id="CHEBI:83421"/>
        <dbReference type="ChEBI" id="CHEBI:456216"/>
        <dbReference type="EC" id="2.7.11.1"/>
    </reaction>
</comment>
<comment type="catalytic activity">
    <reaction>
        <text>L-threonyl-[protein] + ATP = O-phospho-L-threonyl-[protein] + ADP + H(+)</text>
        <dbReference type="Rhea" id="RHEA:46608"/>
        <dbReference type="Rhea" id="RHEA-COMP:11060"/>
        <dbReference type="Rhea" id="RHEA-COMP:11605"/>
        <dbReference type="ChEBI" id="CHEBI:15378"/>
        <dbReference type="ChEBI" id="CHEBI:30013"/>
        <dbReference type="ChEBI" id="CHEBI:30616"/>
        <dbReference type="ChEBI" id="CHEBI:61977"/>
        <dbReference type="ChEBI" id="CHEBI:456216"/>
        <dbReference type="EC" id="2.7.11.1"/>
    </reaction>
</comment>
<comment type="similarity">
    <text evidence="2">Belongs to the protein kinase superfamily. Ser/Thr protein kinase family.</text>
</comment>
<keyword id="KW-0067">ATP-binding</keyword>
<keyword id="KW-0418">Kinase</keyword>
<keyword id="KW-0547">Nucleotide-binding</keyword>
<keyword id="KW-0597">Phosphoprotein</keyword>
<keyword id="KW-1185">Reference proteome</keyword>
<keyword id="KW-0723">Serine/threonine-protein kinase</keyword>
<keyword id="KW-0808">Transferase</keyword>
<reference key="1">
    <citation type="journal article" date="1994" name="Mol. Cell. Biol.">
        <title>Identification of cut8+ and cek1+, a novel protein kinase gene, which complement a fission yeast mutation that blocks anaphase.</title>
        <authorList>
            <person name="Samejima I."/>
            <person name="Yanagida M."/>
        </authorList>
    </citation>
    <scope>NUCLEOTIDE SEQUENCE [GENOMIC DNA]</scope>
</reference>
<reference key="2">
    <citation type="journal article" date="1994" name="Mol. Cell. Biol.">
        <authorList>
            <person name="Samejima I."/>
            <person name="Yanagida M."/>
        </authorList>
    </citation>
    <scope>ERRATUM OF PUBMED:8065367</scope>
</reference>
<reference key="3">
    <citation type="journal article" date="2002" name="Nature">
        <title>The genome sequence of Schizosaccharomyces pombe.</title>
        <authorList>
            <person name="Wood V."/>
            <person name="Gwilliam R."/>
            <person name="Rajandream M.A."/>
            <person name="Lyne M.H."/>
            <person name="Lyne R."/>
            <person name="Stewart A."/>
            <person name="Sgouros J.G."/>
            <person name="Peat N."/>
            <person name="Hayles J."/>
            <person name="Baker S.G."/>
            <person name="Basham D."/>
            <person name="Bowman S."/>
            <person name="Brooks K."/>
            <person name="Brown D."/>
            <person name="Brown S."/>
            <person name="Chillingworth T."/>
            <person name="Churcher C.M."/>
            <person name="Collins M."/>
            <person name="Connor R."/>
            <person name="Cronin A."/>
            <person name="Davis P."/>
            <person name="Feltwell T."/>
            <person name="Fraser A."/>
            <person name="Gentles S."/>
            <person name="Goble A."/>
            <person name="Hamlin N."/>
            <person name="Harris D.E."/>
            <person name="Hidalgo J."/>
            <person name="Hodgson G."/>
            <person name="Holroyd S."/>
            <person name="Hornsby T."/>
            <person name="Howarth S."/>
            <person name="Huckle E.J."/>
            <person name="Hunt S."/>
            <person name="Jagels K."/>
            <person name="James K.D."/>
            <person name="Jones L."/>
            <person name="Jones M."/>
            <person name="Leather S."/>
            <person name="McDonald S."/>
            <person name="McLean J."/>
            <person name="Mooney P."/>
            <person name="Moule S."/>
            <person name="Mungall K.L."/>
            <person name="Murphy L.D."/>
            <person name="Niblett D."/>
            <person name="Odell C."/>
            <person name="Oliver K."/>
            <person name="O'Neil S."/>
            <person name="Pearson D."/>
            <person name="Quail M.A."/>
            <person name="Rabbinowitsch E."/>
            <person name="Rutherford K.M."/>
            <person name="Rutter S."/>
            <person name="Saunders D."/>
            <person name="Seeger K."/>
            <person name="Sharp S."/>
            <person name="Skelton J."/>
            <person name="Simmonds M.N."/>
            <person name="Squares R."/>
            <person name="Squares S."/>
            <person name="Stevens K."/>
            <person name="Taylor K."/>
            <person name="Taylor R.G."/>
            <person name="Tivey A."/>
            <person name="Walsh S.V."/>
            <person name="Warren T."/>
            <person name="Whitehead S."/>
            <person name="Woodward J.R."/>
            <person name="Volckaert G."/>
            <person name="Aert R."/>
            <person name="Robben J."/>
            <person name="Grymonprez B."/>
            <person name="Weltjens I."/>
            <person name="Vanstreels E."/>
            <person name="Rieger M."/>
            <person name="Schaefer M."/>
            <person name="Mueller-Auer S."/>
            <person name="Gabel C."/>
            <person name="Fuchs M."/>
            <person name="Duesterhoeft A."/>
            <person name="Fritzc C."/>
            <person name="Holzer E."/>
            <person name="Moestl D."/>
            <person name="Hilbert H."/>
            <person name="Borzym K."/>
            <person name="Langer I."/>
            <person name="Beck A."/>
            <person name="Lehrach H."/>
            <person name="Reinhardt R."/>
            <person name="Pohl T.M."/>
            <person name="Eger P."/>
            <person name="Zimmermann W."/>
            <person name="Wedler H."/>
            <person name="Wambutt R."/>
            <person name="Purnelle B."/>
            <person name="Goffeau A."/>
            <person name="Cadieu E."/>
            <person name="Dreano S."/>
            <person name="Gloux S."/>
            <person name="Lelaure V."/>
            <person name="Mottier S."/>
            <person name="Galibert F."/>
            <person name="Aves S.J."/>
            <person name="Xiang Z."/>
            <person name="Hunt C."/>
            <person name="Moore K."/>
            <person name="Hurst S.M."/>
            <person name="Lucas M."/>
            <person name="Rochet M."/>
            <person name="Gaillardin C."/>
            <person name="Tallada V.A."/>
            <person name="Garzon A."/>
            <person name="Thode G."/>
            <person name="Daga R.R."/>
            <person name="Cruzado L."/>
            <person name="Jimenez J."/>
            <person name="Sanchez M."/>
            <person name="del Rey F."/>
            <person name="Benito J."/>
            <person name="Dominguez A."/>
            <person name="Revuelta J.L."/>
            <person name="Moreno S."/>
            <person name="Armstrong J."/>
            <person name="Forsburg S.L."/>
            <person name="Cerutti L."/>
            <person name="Lowe T."/>
            <person name="McCombie W.R."/>
            <person name="Paulsen I."/>
            <person name="Potashkin J."/>
            <person name="Shpakovski G.V."/>
            <person name="Ussery D."/>
            <person name="Barrell B.G."/>
            <person name="Nurse P."/>
        </authorList>
    </citation>
    <scope>NUCLEOTIDE SEQUENCE [LARGE SCALE GENOMIC DNA]</scope>
    <source>
        <strain>972 / ATCC 24843</strain>
    </source>
</reference>
<reference key="4">
    <citation type="journal article" date="2008" name="J. Proteome Res.">
        <title>Phosphoproteome analysis of fission yeast.</title>
        <authorList>
            <person name="Wilson-Grady J.T."/>
            <person name="Villen J."/>
            <person name="Gygi S.P."/>
        </authorList>
    </citation>
    <scope>PHOSPHORYLATION [LARGE SCALE ANALYSIS] AT SER-525; SER-748 AND SER-1211</scope>
    <scope>IDENTIFICATION BY MASS SPECTROMETRY</scope>
</reference>
<accession>P38938</accession>
<accession>Q9Y7N8</accession>
<protein>
    <recommendedName>
        <fullName>Serine/threonine-protein kinase cek1</fullName>
        <ecNumber>2.7.11.1</ecNumber>
    </recommendedName>
</protein>
<gene>
    <name type="primary">cek1</name>
    <name type="ORF">SPCC1450.11c</name>
</gene>
<dbReference type="EC" id="2.7.11.1"/>
<dbReference type="EMBL" id="D31773">
    <property type="protein sequence ID" value="BAA06551.1"/>
    <property type="molecule type" value="Genomic_DNA"/>
</dbReference>
<dbReference type="EMBL" id="CU329672">
    <property type="protein sequence ID" value="CAB40178.1"/>
    <property type="molecule type" value="Genomic_DNA"/>
</dbReference>
<dbReference type="PIR" id="T40993">
    <property type="entry name" value="T40993"/>
</dbReference>
<dbReference type="RefSeq" id="NP_588310.1">
    <property type="nucleotide sequence ID" value="NM_001023300.2"/>
</dbReference>
<dbReference type="SMR" id="P38938"/>
<dbReference type="BioGRID" id="275778">
    <property type="interactions" value="36"/>
</dbReference>
<dbReference type="FunCoup" id="P38938">
    <property type="interactions" value="384"/>
</dbReference>
<dbReference type="IntAct" id="P38938">
    <property type="interactions" value="1"/>
</dbReference>
<dbReference type="STRING" id="284812.P38938"/>
<dbReference type="iPTMnet" id="P38938"/>
<dbReference type="PaxDb" id="4896-SPCC1450.11c.1"/>
<dbReference type="EnsemblFungi" id="SPCC1450.11c.1">
    <property type="protein sequence ID" value="SPCC1450.11c.1:pep"/>
    <property type="gene ID" value="SPCC1450.11c"/>
</dbReference>
<dbReference type="GeneID" id="2539208"/>
<dbReference type="KEGG" id="spo:2539208"/>
<dbReference type="PomBase" id="SPCC1450.11c">
    <property type="gene designation" value="cek1"/>
</dbReference>
<dbReference type="VEuPathDB" id="FungiDB:SPCC1450.11c"/>
<dbReference type="eggNOG" id="KOG0605">
    <property type="taxonomic scope" value="Eukaryota"/>
</dbReference>
<dbReference type="HOGENOM" id="CLU_000709_3_0_1"/>
<dbReference type="InParanoid" id="P38938"/>
<dbReference type="OMA" id="HNRRFVG"/>
<dbReference type="PhylomeDB" id="P38938"/>
<dbReference type="BRENDA" id="2.7.11.1">
    <property type="organism ID" value="5613"/>
</dbReference>
<dbReference type="PRO" id="PR:P38938"/>
<dbReference type="Proteomes" id="UP000002485">
    <property type="component" value="Chromosome III"/>
</dbReference>
<dbReference type="GO" id="GO:0005737">
    <property type="term" value="C:cytoplasm"/>
    <property type="evidence" value="ECO:0000318"/>
    <property type="project" value="GO_Central"/>
</dbReference>
<dbReference type="GO" id="GO:0005829">
    <property type="term" value="C:cytosol"/>
    <property type="evidence" value="ECO:0007005"/>
    <property type="project" value="PomBase"/>
</dbReference>
<dbReference type="GO" id="GO:0005634">
    <property type="term" value="C:nucleus"/>
    <property type="evidence" value="ECO:0000318"/>
    <property type="project" value="GO_Central"/>
</dbReference>
<dbReference type="GO" id="GO:0005524">
    <property type="term" value="F:ATP binding"/>
    <property type="evidence" value="ECO:0007669"/>
    <property type="project" value="UniProtKB-KW"/>
</dbReference>
<dbReference type="GO" id="GO:0106310">
    <property type="term" value="F:protein serine kinase activity"/>
    <property type="evidence" value="ECO:0007669"/>
    <property type="project" value="RHEA"/>
</dbReference>
<dbReference type="GO" id="GO:0004674">
    <property type="term" value="F:protein serine/threonine kinase activity"/>
    <property type="evidence" value="ECO:0000318"/>
    <property type="project" value="GO_Central"/>
</dbReference>
<dbReference type="GO" id="GO:0035556">
    <property type="term" value="P:intracellular signal transduction"/>
    <property type="evidence" value="ECO:0000318"/>
    <property type="project" value="GO_Central"/>
</dbReference>
<dbReference type="GO" id="GO:0045842">
    <property type="term" value="P:positive regulation of mitotic metaphase/anaphase transition"/>
    <property type="evidence" value="ECO:0000316"/>
    <property type="project" value="PomBase"/>
</dbReference>
<dbReference type="CDD" id="cd00130">
    <property type="entry name" value="PAS"/>
    <property type="match status" value="1"/>
</dbReference>
<dbReference type="CDD" id="cd05611">
    <property type="entry name" value="STKc_Rim15_like"/>
    <property type="match status" value="1"/>
</dbReference>
<dbReference type="FunFam" id="1.10.510.10:FF:000340">
    <property type="entry name" value="Serine threonine protein kinase"/>
    <property type="match status" value="1"/>
</dbReference>
<dbReference type="FunFam" id="3.30.200.20:FF:001008">
    <property type="entry name" value="Serine/threonine-protein kinase cek1"/>
    <property type="match status" value="1"/>
</dbReference>
<dbReference type="Gene3D" id="3.30.200.20">
    <property type="entry name" value="Phosphorylase Kinase, domain 1"/>
    <property type="match status" value="2"/>
</dbReference>
<dbReference type="Gene3D" id="1.10.510.10">
    <property type="entry name" value="Transferase(Phosphotransferase) domain 1"/>
    <property type="match status" value="2"/>
</dbReference>
<dbReference type="InterPro" id="IPR000961">
    <property type="entry name" value="AGC-kinase_C"/>
</dbReference>
<dbReference type="InterPro" id="IPR011009">
    <property type="entry name" value="Kinase-like_dom_sf"/>
</dbReference>
<dbReference type="InterPro" id="IPR000014">
    <property type="entry name" value="PAS"/>
</dbReference>
<dbReference type="InterPro" id="IPR000719">
    <property type="entry name" value="Prot_kinase_dom"/>
</dbReference>
<dbReference type="InterPro" id="IPR008271">
    <property type="entry name" value="Ser/Thr_kinase_AS"/>
</dbReference>
<dbReference type="InterPro" id="IPR050236">
    <property type="entry name" value="Ser_Thr_kinase_AGC"/>
</dbReference>
<dbReference type="PANTHER" id="PTHR24356">
    <property type="entry name" value="SERINE/THREONINE-PROTEIN KINASE"/>
    <property type="match status" value="1"/>
</dbReference>
<dbReference type="PANTHER" id="PTHR24356:SF413">
    <property type="entry name" value="SERINE_THREONINE-PROTEIN KINASE CEK1-RELATED"/>
    <property type="match status" value="1"/>
</dbReference>
<dbReference type="Pfam" id="PF00069">
    <property type="entry name" value="Pkinase"/>
    <property type="match status" value="2"/>
</dbReference>
<dbReference type="SMART" id="SM00133">
    <property type="entry name" value="S_TK_X"/>
    <property type="match status" value="1"/>
</dbReference>
<dbReference type="SMART" id="SM00220">
    <property type="entry name" value="S_TKc"/>
    <property type="match status" value="1"/>
</dbReference>
<dbReference type="SUPFAM" id="SSF56112">
    <property type="entry name" value="Protein kinase-like (PK-like)"/>
    <property type="match status" value="1"/>
</dbReference>
<dbReference type="PROSITE" id="PS51285">
    <property type="entry name" value="AGC_KINASE_CTER"/>
    <property type="match status" value="1"/>
</dbReference>
<dbReference type="PROSITE" id="PS50112">
    <property type="entry name" value="PAS"/>
    <property type="match status" value="1"/>
</dbReference>
<dbReference type="PROSITE" id="PS50011">
    <property type="entry name" value="PROTEIN_KINASE_DOM"/>
    <property type="match status" value="1"/>
</dbReference>
<dbReference type="PROSITE" id="PS00108">
    <property type="entry name" value="PROTEIN_KINASE_ST"/>
    <property type="match status" value="1"/>
</dbReference>
<sequence>MKHIKNEREEVFLEDDQAQHSQAELLSSKDENLQPSIPLSPVAFELDFSGNFQFISDNSSELLDIPKDKIIGHSVAEVLGTDGYNAFMRAVNCLLKDDSHSYHVRFQHSINANHANQNYYTAKGDLPSDEKITKPFDAIGILIRHPGSAIPAHTMWVVNPATNSLGSVSPLVTKLLDVIGFGASLLDKYLCDLRTSYHKHNSLDALPLPTPEFCQICEREIQSWFFELHSKFCLSTSTYESVVQAAQDSLLYFRSTLLEIQEGMQKDSSLVPVYKNEPLIVDADDYFFTDENKQTLSLCSFLSQVMYYLEVAIDITIPPVKIIVNFDKVDSLRVQSPRSEKATIELDNYNPSLENCSSAVIALWEDIKTAVDTKITGVLRLRNAIYYSERIRLEIDHHVQEIIDDVVSNLVTNHSSTSLGHLESKLAPSITFPDACDALEAEECITRPGSATNTPQSDRSLDINDLSRSSSYSRHLSHVSLSNPDFAIGSPMSQDSSNYSSPLHRRKASDSNFSDPRFDDLKYLSPNSSPRFVASDGPNRPASNGRSSLFSRGRASNLGDVGLRLPSPSPRIHTIVPNSAPEHPSINDYKILKPISKGAFGSVYLAQKRTTGDYFAIKILKKSNMIAKNQVINVRAERAILMSQGESPFVAKLYYTFQSKDYLYLVMEYLNGGDCGSLLKTMGVLDLDWIRTYIAETVLCLGDLHDRGIIHRDIKPENLLISQNGHLKLTDFGLSRVGYMKRHRRKQSSSIPVLDLRDRSSAISDLSLSTASSVLEAQSLITPERPKRPSLNEKLLSLDGTSIRLAGQSFNYENSAEDSPTATNTPTSQVDESNIFRSTDSPRVQPFFENKDPSKRFIGTPDYIAPEVILGNPGIKASDWWSLGCVVFEFLFGYPPFNAETPDQVFQNILARRINWPAEVFTAESSVALDLIDRLLCMNPANRLGANGVEEIKAHPFFKSVNWDTILEEDPPFVPKPFSPEDTVYFDSRGLKGFDFSEYYNQPTVTEAQKLEEERPASSIPQHVSGNRKGRLRSNTISTPEFGSFTYRNLDFLNKANRNTIQKLRKEHMAVKSAKTSVDDTFSQYMSRFKAKLSTSQSVGPVKSSRRASMADYEASTTTRVQDITTDSIDSIDDFDSLKEGRMLSFFDNLALEDHKGVSSTMSASQSQSSMHTALPDVTEGTSSDEHTTIQKGRIDNLQAQSLTHKRNAISYPGLFQLDRLQMIIPKDEIELAEILKKIFPKLTLVLIDDPWSILKKLLQNEQFNVVFLHFGNDKVSSSRLMYSVRTSATINSRVPFVYICEDETCIPTDLQSDGVLLKPITCENIESCLRKLDVWHS</sequence>
<evidence type="ECO:0000255" key="1">
    <source>
        <dbReference type="PROSITE-ProRule" id="PRU00140"/>
    </source>
</evidence>
<evidence type="ECO:0000255" key="2">
    <source>
        <dbReference type="PROSITE-ProRule" id="PRU00159"/>
    </source>
</evidence>
<evidence type="ECO:0000255" key="3">
    <source>
        <dbReference type="PROSITE-ProRule" id="PRU00618"/>
    </source>
</evidence>
<evidence type="ECO:0000255" key="4">
    <source>
        <dbReference type="PROSITE-ProRule" id="PRU10027"/>
    </source>
</evidence>
<evidence type="ECO:0000256" key="5">
    <source>
        <dbReference type="SAM" id="MobiDB-lite"/>
    </source>
</evidence>
<evidence type="ECO:0000269" key="6">
    <source>
    </source>
</evidence>
<evidence type="ECO:0000305" key="7"/>
<organism>
    <name type="scientific">Schizosaccharomyces pombe (strain 972 / ATCC 24843)</name>
    <name type="common">Fission yeast</name>
    <dbReference type="NCBI Taxonomy" id="284812"/>
    <lineage>
        <taxon>Eukaryota</taxon>
        <taxon>Fungi</taxon>
        <taxon>Dikarya</taxon>
        <taxon>Ascomycota</taxon>
        <taxon>Taphrinomycotina</taxon>
        <taxon>Schizosaccharomycetes</taxon>
        <taxon>Schizosaccharomycetales</taxon>
        <taxon>Schizosaccharomycetaceae</taxon>
        <taxon>Schizosaccharomyces</taxon>
    </lineage>
</organism>